<protein>
    <recommendedName>
        <fullName>UPF0337 protein RB10934</fullName>
    </recommendedName>
</protein>
<dbReference type="EMBL" id="BX294152">
    <property type="protein sequence ID" value="CAD77073.1"/>
    <property type="molecule type" value="Genomic_DNA"/>
</dbReference>
<dbReference type="RefSeq" id="NP_869695.1">
    <property type="nucleotide sequence ID" value="NC_005027.1"/>
</dbReference>
<dbReference type="SMR" id="Q7UK08"/>
<dbReference type="FunCoup" id="Q7UK08">
    <property type="interactions" value="55"/>
</dbReference>
<dbReference type="STRING" id="243090.RB10934"/>
<dbReference type="EnsemblBacteria" id="CAD77073">
    <property type="protein sequence ID" value="CAD77073"/>
    <property type="gene ID" value="RB10934"/>
</dbReference>
<dbReference type="KEGG" id="rba:RB10934"/>
<dbReference type="PATRIC" id="fig|243090.15.peg.5279"/>
<dbReference type="eggNOG" id="COG3237">
    <property type="taxonomic scope" value="Bacteria"/>
</dbReference>
<dbReference type="HOGENOM" id="CLU_135567_4_1_0"/>
<dbReference type="InParanoid" id="Q7UK08"/>
<dbReference type="OrthoDB" id="9796058at2"/>
<dbReference type="Proteomes" id="UP000001025">
    <property type="component" value="Chromosome"/>
</dbReference>
<dbReference type="Gene3D" id="1.10.1470.10">
    <property type="entry name" value="YjbJ"/>
    <property type="match status" value="1"/>
</dbReference>
<dbReference type="InterPro" id="IPR008462">
    <property type="entry name" value="CsbD"/>
</dbReference>
<dbReference type="InterPro" id="IPR050423">
    <property type="entry name" value="UPF0337_stress_rsp"/>
</dbReference>
<dbReference type="InterPro" id="IPR026042">
    <property type="entry name" value="YjbJ"/>
</dbReference>
<dbReference type="InterPro" id="IPR036629">
    <property type="entry name" value="YjbJ_sf"/>
</dbReference>
<dbReference type="PANTHER" id="PTHR34977">
    <property type="entry name" value="UPF0337 PROTEIN YJBJ"/>
    <property type="match status" value="1"/>
</dbReference>
<dbReference type="PANTHER" id="PTHR34977:SF1">
    <property type="entry name" value="UPF0337 PROTEIN YJBJ"/>
    <property type="match status" value="1"/>
</dbReference>
<dbReference type="Pfam" id="PF05532">
    <property type="entry name" value="CsbD"/>
    <property type="match status" value="1"/>
</dbReference>
<dbReference type="PIRSF" id="PIRSF039008">
    <property type="entry name" value="YjbJ"/>
    <property type="match status" value="1"/>
</dbReference>
<dbReference type="SUPFAM" id="SSF69047">
    <property type="entry name" value="Hypothetical protein YjbJ"/>
    <property type="match status" value="1"/>
</dbReference>
<feature type="chain" id="PRO_0000210026" description="UPF0337 protein RB10934">
    <location>
        <begin position="1"/>
        <end position="68"/>
    </location>
</feature>
<keyword id="KW-1185">Reference proteome</keyword>
<evidence type="ECO:0000305" key="1"/>
<organism>
    <name type="scientific">Rhodopirellula baltica (strain DSM 10527 / NCIMB 13988 / SH1)</name>
    <dbReference type="NCBI Taxonomy" id="243090"/>
    <lineage>
        <taxon>Bacteria</taxon>
        <taxon>Pseudomonadati</taxon>
        <taxon>Planctomycetota</taxon>
        <taxon>Planctomycetia</taxon>
        <taxon>Pirellulales</taxon>
        <taxon>Pirellulaceae</taxon>
        <taxon>Rhodopirellula</taxon>
    </lineage>
</organism>
<gene>
    <name type="ordered locus">RB10934</name>
</gene>
<sequence>MMNWDRIEGKWKQLKGQAQQQWGDLTDDDLDRVDGKREELVGVVQERYGLAKDEAEKQVQQFESSCNC</sequence>
<reference key="1">
    <citation type="journal article" date="2003" name="Proc. Natl. Acad. Sci. U.S.A.">
        <title>Complete genome sequence of the marine planctomycete Pirellula sp. strain 1.</title>
        <authorList>
            <person name="Gloeckner F.O."/>
            <person name="Kube M."/>
            <person name="Bauer M."/>
            <person name="Teeling H."/>
            <person name="Lombardot T."/>
            <person name="Ludwig W."/>
            <person name="Gade D."/>
            <person name="Beck A."/>
            <person name="Borzym K."/>
            <person name="Heitmann K."/>
            <person name="Rabus R."/>
            <person name="Schlesner H."/>
            <person name="Amann R."/>
            <person name="Reinhardt R."/>
        </authorList>
    </citation>
    <scope>NUCLEOTIDE SEQUENCE [LARGE SCALE GENOMIC DNA]</scope>
    <source>
        <strain>DSM 10527 / NCIMB 13988 / SH1</strain>
    </source>
</reference>
<proteinExistence type="inferred from homology"/>
<name>YA934_RHOBA</name>
<comment type="similarity">
    <text evidence="1">Belongs to the UPF0337 (CsbD) family.</text>
</comment>
<accession>Q7UK08</accession>